<evidence type="ECO:0000255" key="1">
    <source>
        <dbReference type="HAMAP-Rule" id="MF_00191"/>
    </source>
</evidence>
<reference key="1">
    <citation type="submission" date="2008-06" db="EMBL/GenBank/DDBJ databases">
        <title>Complete sequence of Pelodictyon phaeoclathratiforme BU-1.</title>
        <authorList>
            <consortium name="US DOE Joint Genome Institute"/>
            <person name="Lucas S."/>
            <person name="Copeland A."/>
            <person name="Lapidus A."/>
            <person name="Glavina del Rio T."/>
            <person name="Dalin E."/>
            <person name="Tice H."/>
            <person name="Bruce D."/>
            <person name="Goodwin L."/>
            <person name="Pitluck S."/>
            <person name="Schmutz J."/>
            <person name="Larimer F."/>
            <person name="Land M."/>
            <person name="Hauser L."/>
            <person name="Kyrpides N."/>
            <person name="Mikhailova N."/>
            <person name="Liu Z."/>
            <person name="Li T."/>
            <person name="Zhao F."/>
            <person name="Overmann J."/>
            <person name="Bryant D.A."/>
            <person name="Richardson P."/>
        </authorList>
    </citation>
    <scope>NUCLEOTIDE SEQUENCE [LARGE SCALE GENOMIC DNA]</scope>
    <source>
        <strain>DSM 5477 / BU-1</strain>
    </source>
</reference>
<proteinExistence type="inferred from homology"/>
<comment type="function">
    <text evidence="1">Catalyzes the conversion of 1-hydroxy-2-methyl-2-(E)-butenyl 4-diphosphate (HMBPP) into a mixture of isopentenyl diphosphate (IPP) and dimethylallyl diphosphate (DMAPP). Acts in the terminal step of the DOXP/MEP pathway for isoprenoid precursor biosynthesis.</text>
</comment>
<comment type="catalytic activity">
    <reaction evidence="1">
        <text>isopentenyl diphosphate + 2 oxidized [2Fe-2S]-[ferredoxin] + H2O = (2E)-4-hydroxy-3-methylbut-2-enyl diphosphate + 2 reduced [2Fe-2S]-[ferredoxin] + 2 H(+)</text>
        <dbReference type="Rhea" id="RHEA:24488"/>
        <dbReference type="Rhea" id="RHEA-COMP:10000"/>
        <dbReference type="Rhea" id="RHEA-COMP:10001"/>
        <dbReference type="ChEBI" id="CHEBI:15377"/>
        <dbReference type="ChEBI" id="CHEBI:15378"/>
        <dbReference type="ChEBI" id="CHEBI:33737"/>
        <dbReference type="ChEBI" id="CHEBI:33738"/>
        <dbReference type="ChEBI" id="CHEBI:128753"/>
        <dbReference type="ChEBI" id="CHEBI:128769"/>
        <dbReference type="EC" id="1.17.7.4"/>
    </reaction>
</comment>
<comment type="catalytic activity">
    <reaction evidence="1">
        <text>dimethylallyl diphosphate + 2 oxidized [2Fe-2S]-[ferredoxin] + H2O = (2E)-4-hydroxy-3-methylbut-2-enyl diphosphate + 2 reduced [2Fe-2S]-[ferredoxin] + 2 H(+)</text>
        <dbReference type="Rhea" id="RHEA:24825"/>
        <dbReference type="Rhea" id="RHEA-COMP:10000"/>
        <dbReference type="Rhea" id="RHEA-COMP:10001"/>
        <dbReference type="ChEBI" id="CHEBI:15377"/>
        <dbReference type="ChEBI" id="CHEBI:15378"/>
        <dbReference type="ChEBI" id="CHEBI:33737"/>
        <dbReference type="ChEBI" id="CHEBI:33738"/>
        <dbReference type="ChEBI" id="CHEBI:57623"/>
        <dbReference type="ChEBI" id="CHEBI:128753"/>
        <dbReference type="EC" id="1.17.7.4"/>
    </reaction>
</comment>
<comment type="cofactor">
    <cofactor evidence="1">
        <name>[4Fe-4S] cluster</name>
        <dbReference type="ChEBI" id="CHEBI:49883"/>
    </cofactor>
    <text evidence="1">Binds 1 [4Fe-4S] cluster per subunit.</text>
</comment>
<comment type="pathway">
    <text evidence="1">Isoprenoid biosynthesis; dimethylallyl diphosphate biosynthesis; dimethylallyl diphosphate from (2E)-4-hydroxy-3-methylbutenyl diphosphate: step 1/1.</text>
</comment>
<comment type="pathway">
    <text evidence="1">Isoprenoid biosynthesis; isopentenyl diphosphate biosynthesis via DXP pathway; isopentenyl diphosphate from 1-deoxy-D-xylulose 5-phosphate: step 6/6.</text>
</comment>
<comment type="similarity">
    <text evidence="1">Belongs to the IspH family.</text>
</comment>
<keyword id="KW-0004">4Fe-4S</keyword>
<keyword id="KW-0408">Iron</keyword>
<keyword id="KW-0411">Iron-sulfur</keyword>
<keyword id="KW-0414">Isoprene biosynthesis</keyword>
<keyword id="KW-0479">Metal-binding</keyword>
<keyword id="KW-0560">Oxidoreductase</keyword>
<keyword id="KW-1185">Reference proteome</keyword>
<name>ISPH_PELPB</name>
<accession>B4SCU0</accession>
<organism>
    <name type="scientific">Pelodictyon phaeoclathratiforme (strain DSM 5477 / BU-1)</name>
    <dbReference type="NCBI Taxonomy" id="324925"/>
    <lineage>
        <taxon>Bacteria</taxon>
        <taxon>Pseudomonadati</taxon>
        <taxon>Chlorobiota</taxon>
        <taxon>Chlorobiia</taxon>
        <taxon>Chlorobiales</taxon>
        <taxon>Chlorobiaceae</taxon>
        <taxon>Chlorobium/Pelodictyon group</taxon>
        <taxon>Pelodictyon</taxon>
    </lineage>
</organism>
<dbReference type="EC" id="1.17.7.4" evidence="1"/>
<dbReference type="EMBL" id="CP001110">
    <property type="protein sequence ID" value="ACF42774.1"/>
    <property type="molecule type" value="Genomic_DNA"/>
</dbReference>
<dbReference type="RefSeq" id="WP_012507269.1">
    <property type="nucleotide sequence ID" value="NC_011060.1"/>
</dbReference>
<dbReference type="SMR" id="B4SCU0"/>
<dbReference type="STRING" id="324925.Ppha_0448"/>
<dbReference type="KEGG" id="pph:Ppha_0448"/>
<dbReference type="eggNOG" id="COG0761">
    <property type="taxonomic scope" value="Bacteria"/>
</dbReference>
<dbReference type="HOGENOM" id="CLU_027486_0_1_10"/>
<dbReference type="OrthoDB" id="9777362at2"/>
<dbReference type="UniPathway" id="UPA00056">
    <property type="reaction ID" value="UER00097"/>
</dbReference>
<dbReference type="UniPathway" id="UPA00059">
    <property type="reaction ID" value="UER00105"/>
</dbReference>
<dbReference type="Proteomes" id="UP000002724">
    <property type="component" value="Chromosome"/>
</dbReference>
<dbReference type="GO" id="GO:0051539">
    <property type="term" value="F:4 iron, 4 sulfur cluster binding"/>
    <property type="evidence" value="ECO:0007669"/>
    <property type="project" value="UniProtKB-UniRule"/>
</dbReference>
<dbReference type="GO" id="GO:0051745">
    <property type="term" value="F:4-hydroxy-3-methylbut-2-enyl diphosphate reductase activity"/>
    <property type="evidence" value="ECO:0007669"/>
    <property type="project" value="UniProtKB-UniRule"/>
</dbReference>
<dbReference type="GO" id="GO:0046872">
    <property type="term" value="F:metal ion binding"/>
    <property type="evidence" value="ECO:0007669"/>
    <property type="project" value="UniProtKB-KW"/>
</dbReference>
<dbReference type="GO" id="GO:0050992">
    <property type="term" value="P:dimethylallyl diphosphate biosynthetic process"/>
    <property type="evidence" value="ECO:0007669"/>
    <property type="project" value="UniProtKB-UniRule"/>
</dbReference>
<dbReference type="GO" id="GO:0019288">
    <property type="term" value="P:isopentenyl diphosphate biosynthetic process, methylerythritol 4-phosphate pathway"/>
    <property type="evidence" value="ECO:0007669"/>
    <property type="project" value="UniProtKB-UniRule"/>
</dbReference>
<dbReference type="GO" id="GO:0016114">
    <property type="term" value="P:terpenoid biosynthetic process"/>
    <property type="evidence" value="ECO:0007669"/>
    <property type="project" value="UniProtKB-UniRule"/>
</dbReference>
<dbReference type="CDD" id="cd13944">
    <property type="entry name" value="lytB_ispH"/>
    <property type="match status" value="1"/>
</dbReference>
<dbReference type="Gene3D" id="3.40.50.11270">
    <property type="match status" value="1"/>
</dbReference>
<dbReference type="Gene3D" id="3.40.1010.20">
    <property type="entry name" value="4-hydroxy-3-methylbut-2-enyl diphosphate reductase, catalytic domain"/>
    <property type="match status" value="2"/>
</dbReference>
<dbReference type="HAMAP" id="MF_00191">
    <property type="entry name" value="IspH"/>
    <property type="match status" value="1"/>
</dbReference>
<dbReference type="InterPro" id="IPR003451">
    <property type="entry name" value="LytB/IspH"/>
</dbReference>
<dbReference type="NCBIfam" id="TIGR00216">
    <property type="entry name" value="ispH_lytB"/>
    <property type="match status" value="1"/>
</dbReference>
<dbReference type="NCBIfam" id="NF002187">
    <property type="entry name" value="PRK01045.1-1"/>
    <property type="match status" value="1"/>
</dbReference>
<dbReference type="PANTHER" id="PTHR30426">
    <property type="entry name" value="4-HYDROXY-3-METHYLBUT-2-ENYL DIPHOSPHATE REDUCTASE"/>
    <property type="match status" value="1"/>
</dbReference>
<dbReference type="PANTHER" id="PTHR30426:SF0">
    <property type="entry name" value="4-HYDROXY-3-METHYLBUT-2-ENYL DIPHOSPHATE REDUCTASE"/>
    <property type="match status" value="1"/>
</dbReference>
<dbReference type="Pfam" id="PF02401">
    <property type="entry name" value="LYTB"/>
    <property type="match status" value="1"/>
</dbReference>
<sequence length="321" mass="35886">MNINLDRTSSGFCIGVQGTIYAAEEKLQQEGGLYSFGDIVHNEVEVKRLEALGLVTVDERAFRELRDAHVLIRAHGEPPSTYRIARENNLTVTDTTCPVVSRLQRTTRLLFELGYQIIIYGKQSHPEVIGINGQCNNQAVIIKHADLSDPDELKGLDLAKKSALISQTTMDVPGFYELKALLEARFAQYLSSEKSAWMAIRDIDITAAMTGVLSMPSLLFKDTICRQVSSRNQKLHDFSLANDVVIFVAGKKSSNGQVLYHICKEANPRSYFIEEIEEIEERWLRNSDGRAVATVGVCGATSTPMWHLEKVALHLEKNFAQ</sequence>
<gene>
    <name evidence="1" type="primary">ispH</name>
    <name type="ordered locus">Ppha_0448</name>
</gene>
<protein>
    <recommendedName>
        <fullName evidence="1">4-hydroxy-3-methylbut-2-enyl diphosphate reductase</fullName>
        <shortName evidence="1">HMBPP reductase</shortName>
        <ecNumber evidence="1">1.17.7.4</ecNumber>
    </recommendedName>
</protein>
<feature type="chain" id="PRO_1000098961" description="4-hydroxy-3-methylbut-2-enyl diphosphate reductase">
    <location>
        <begin position="1"/>
        <end position="321"/>
    </location>
</feature>
<feature type="active site" description="Proton donor" evidence="1">
    <location>
        <position position="127"/>
    </location>
</feature>
<feature type="binding site" evidence="1">
    <location>
        <position position="13"/>
    </location>
    <ligand>
        <name>[4Fe-4S] cluster</name>
        <dbReference type="ChEBI" id="CHEBI:49883"/>
    </ligand>
</feature>
<feature type="binding site" evidence="1">
    <location>
        <position position="41"/>
    </location>
    <ligand>
        <name>(2E)-4-hydroxy-3-methylbut-2-enyl diphosphate</name>
        <dbReference type="ChEBI" id="CHEBI:128753"/>
    </ligand>
</feature>
<feature type="binding site" evidence="1">
    <location>
        <position position="41"/>
    </location>
    <ligand>
        <name>dimethylallyl diphosphate</name>
        <dbReference type="ChEBI" id="CHEBI:57623"/>
    </ligand>
</feature>
<feature type="binding site" evidence="1">
    <location>
        <position position="41"/>
    </location>
    <ligand>
        <name>isopentenyl diphosphate</name>
        <dbReference type="ChEBI" id="CHEBI:128769"/>
    </ligand>
</feature>
<feature type="binding site" evidence="1">
    <location>
        <position position="75"/>
    </location>
    <ligand>
        <name>(2E)-4-hydroxy-3-methylbut-2-enyl diphosphate</name>
        <dbReference type="ChEBI" id="CHEBI:128753"/>
    </ligand>
</feature>
<feature type="binding site" evidence="1">
    <location>
        <position position="75"/>
    </location>
    <ligand>
        <name>dimethylallyl diphosphate</name>
        <dbReference type="ChEBI" id="CHEBI:57623"/>
    </ligand>
</feature>
<feature type="binding site" evidence="1">
    <location>
        <position position="75"/>
    </location>
    <ligand>
        <name>isopentenyl diphosphate</name>
        <dbReference type="ChEBI" id="CHEBI:128769"/>
    </ligand>
</feature>
<feature type="binding site" evidence="1">
    <location>
        <position position="97"/>
    </location>
    <ligand>
        <name>[4Fe-4S] cluster</name>
        <dbReference type="ChEBI" id="CHEBI:49883"/>
    </ligand>
</feature>
<feature type="binding site" evidence="1">
    <location>
        <position position="125"/>
    </location>
    <ligand>
        <name>(2E)-4-hydroxy-3-methylbut-2-enyl diphosphate</name>
        <dbReference type="ChEBI" id="CHEBI:128753"/>
    </ligand>
</feature>
<feature type="binding site" evidence="1">
    <location>
        <position position="125"/>
    </location>
    <ligand>
        <name>dimethylallyl diphosphate</name>
        <dbReference type="ChEBI" id="CHEBI:57623"/>
    </ligand>
</feature>
<feature type="binding site" evidence="1">
    <location>
        <position position="125"/>
    </location>
    <ligand>
        <name>isopentenyl diphosphate</name>
        <dbReference type="ChEBI" id="CHEBI:128769"/>
    </ligand>
</feature>
<feature type="binding site" evidence="1">
    <location>
        <position position="168"/>
    </location>
    <ligand>
        <name>(2E)-4-hydroxy-3-methylbut-2-enyl diphosphate</name>
        <dbReference type="ChEBI" id="CHEBI:128753"/>
    </ligand>
</feature>
<feature type="binding site" evidence="1">
    <location>
        <position position="225"/>
    </location>
    <ligand>
        <name>[4Fe-4S] cluster</name>
        <dbReference type="ChEBI" id="CHEBI:49883"/>
    </ligand>
</feature>
<feature type="binding site" evidence="1">
    <location>
        <position position="253"/>
    </location>
    <ligand>
        <name>(2E)-4-hydroxy-3-methylbut-2-enyl diphosphate</name>
        <dbReference type="ChEBI" id="CHEBI:128753"/>
    </ligand>
</feature>
<feature type="binding site" evidence="1">
    <location>
        <position position="253"/>
    </location>
    <ligand>
        <name>dimethylallyl diphosphate</name>
        <dbReference type="ChEBI" id="CHEBI:57623"/>
    </ligand>
</feature>
<feature type="binding site" evidence="1">
    <location>
        <position position="253"/>
    </location>
    <ligand>
        <name>isopentenyl diphosphate</name>
        <dbReference type="ChEBI" id="CHEBI:128769"/>
    </ligand>
</feature>
<feature type="binding site" evidence="1">
    <location>
        <position position="254"/>
    </location>
    <ligand>
        <name>(2E)-4-hydroxy-3-methylbut-2-enyl diphosphate</name>
        <dbReference type="ChEBI" id="CHEBI:128753"/>
    </ligand>
</feature>
<feature type="binding site" evidence="1">
    <location>
        <position position="254"/>
    </location>
    <ligand>
        <name>dimethylallyl diphosphate</name>
        <dbReference type="ChEBI" id="CHEBI:57623"/>
    </ligand>
</feature>
<feature type="binding site" evidence="1">
    <location>
        <position position="254"/>
    </location>
    <ligand>
        <name>isopentenyl diphosphate</name>
        <dbReference type="ChEBI" id="CHEBI:128769"/>
    </ligand>
</feature>
<feature type="binding site" evidence="1">
    <location>
        <position position="255"/>
    </location>
    <ligand>
        <name>(2E)-4-hydroxy-3-methylbut-2-enyl diphosphate</name>
        <dbReference type="ChEBI" id="CHEBI:128753"/>
    </ligand>
</feature>
<feature type="binding site" evidence="1">
    <location>
        <position position="255"/>
    </location>
    <ligand>
        <name>dimethylallyl diphosphate</name>
        <dbReference type="ChEBI" id="CHEBI:57623"/>
    </ligand>
</feature>
<feature type="binding site" evidence="1">
    <location>
        <position position="255"/>
    </location>
    <ligand>
        <name>isopentenyl diphosphate</name>
        <dbReference type="ChEBI" id="CHEBI:128769"/>
    </ligand>
</feature>
<feature type="binding site" evidence="1">
    <location>
        <position position="302"/>
    </location>
    <ligand>
        <name>(2E)-4-hydroxy-3-methylbut-2-enyl diphosphate</name>
        <dbReference type="ChEBI" id="CHEBI:128753"/>
    </ligand>
</feature>
<feature type="binding site" evidence="1">
    <location>
        <position position="302"/>
    </location>
    <ligand>
        <name>dimethylallyl diphosphate</name>
        <dbReference type="ChEBI" id="CHEBI:57623"/>
    </ligand>
</feature>
<feature type="binding site" evidence="1">
    <location>
        <position position="302"/>
    </location>
    <ligand>
        <name>isopentenyl diphosphate</name>
        <dbReference type="ChEBI" id="CHEBI:128769"/>
    </ligand>
</feature>